<protein>
    <recommendedName>
        <fullName>Peptide chain release factor subunit 1</fullName>
    </recommendedName>
    <alternativeName>
        <fullName>Translation termination factor aRF1</fullName>
    </alternativeName>
</protein>
<organism>
    <name type="scientific">Saccharolobus solfataricus (strain ATCC 35092 / DSM 1617 / JCM 11322 / P2)</name>
    <name type="common">Sulfolobus solfataricus</name>
    <dbReference type="NCBI Taxonomy" id="273057"/>
    <lineage>
        <taxon>Archaea</taxon>
        <taxon>Thermoproteota</taxon>
        <taxon>Thermoprotei</taxon>
        <taxon>Sulfolobales</taxon>
        <taxon>Sulfolobaceae</taxon>
        <taxon>Saccharolobus</taxon>
    </lineage>
</organism>
<name>RF1_SACS2</name>
<keyword id="KW-0963">Cytoplasm</keyword>
<keyword id="KW-0648">Protein biosynthesis</keyword>
<keyword id="KW-1185">Reference proteome</keyword>
<proteinExistence type="evidence at protein level"/>
<sequence length="369" mass="42310">MSXDEYALNKQELKALIKELKKWKAPATVLLSLYIPPGRPIPDVVNLLRQEYSIAQNIKLKRTRDAVLSAIGAAIDRLNKIPKIDGNGLVLFCGENFDTEDFKCFMFSPPDKVPLFFYRTDKEFHLEFLEDMVEDTAVYGLIIVERDEATIGLLKGARIEILEEIEGFVPGKHMMGGQSQRRIDRIIDEMYHNFLKEVGEKVNAYFMPFVQNGKMKGVLLGGPGYAKEDFYKEDYVDYRIKNLILQPLIDVSDQGEVGLREMIMKAEDLLKNQQYIEVEKLLEELKYHLAKDDGLIIYGKEQIKKAMEIGAIEAIVIHEDSTDKELEKLAQDAENYGVKVFVVGDEVPEAEWVKKTFNGIVGKLRYRLY</sequence>
<feature type="chain" id="PRO_0000143185" description="Peptide chain release factor subunit 1">
    <location>
        <begin position="1"/>
        <end position="369"/>
    </location>
</feature>
<reference key="1">
    <citation type="journal article" date="2001" name="Proc. Natl. Acad. Sci. U.S.A.">
        <title>The complete genome of the crenarchaeon Sulfolobus solfataricus P2.</title>
        <authorList>
            <person name="She Q."/>
            <person name="Singh R.K."/>
            <person name="Confalonieri F."/>
            <person name="Zivanovic Y."/>
            <person name="Allard G."/>
            <person name="Awayez M.J."/>
            <person name="Chan-Weiher C.C.-Y."/>
            <person name="Clausen I.G."/>
            <person name="Curtis B.A."/>
            <person name="De Moors A."/>
            <person name="Erauso G."/>
            <person name="Fletcher C."/>
            <person name="Gordon P.M.K."/>
            <person name="Heikamp-de Jong I."/>
            <person name="Jeffries A.C."/>
            <person name="Kozera C.J."/>
            <person name="Medina N."/>
            <person name="Peng X."/>
            <person name="Thi-Ngoc H.P."/>
            <person name="Redder P."/>
            <person name="Schenk M.E."/>
            <person name="Theriault C."/>
            <person name="Tolstrup N."/>
            <person name="Charlebois R.L."/>
            <person name="Doolittle W.F."/>
            <person name="Duguet M."/>
            <person name="Gaasterland T."/>
            <person name="Garrett R.A."/>
            <person name="Ragan M.A."/>
            <person name="Sensen C.W."/>
            <person name="Van der Oost J."/>
        </authorList>
    </citation>
    <scope>NUCLEOTIDE SEQUENCE [LARGE SCALE GENOMIC DNA]</scope>
    <source>
        <strain>ATCC 35092 / DSM 1617 / JCM 11322 / P2</strain>
    </source>
</reference>
<dbReference type="EMBL" id="AE006641">
    <property type="protein sequence ID" value="AAK42492.1"/>
    <property type="status" value="ALT_FRAME"/>
    <property type="molecule type" value="Genomic_DNA"/>
</dbReference>
<dbReference type="PIR" id="E90404">
    <property type="entry name" value="E90404"/>
</dbReference>
<dbReference type="DIP" id="DIP-60311N"/>
<dbReference type="FunCoup" id="Q97W96">
    <property type="interactions" value="344"/>
</dbReference>
<dbReference type="IntAct" id="Q97W96">
    <property type="interactions" value="1"/>
</dbReference>
<dbReference type="STRING" id="273057.SSO2339"/>
<dbReference type="PaxDb" id="273057-SSO2339"/>
<dbReference type="EnsemblBacteria" id="AAK42492">
    <property type="protein sequence ID" value="AAK42492"/>
    <property type="gene ID" value="SSO2339"/>
</dbReference>
<dbReference type="KEGG" id="sso:SSO2339"/>
<dbReference type="PATRIC" id="fig|273057.12.peg.2425"/>
<dbReference type="eggNOG" id="arCOG01742">
    <property type="taxonomic scope" value="Archaea"/>
</dbReference>
<dbReference type="HOGENOM" id="CLU_035759_3_0_2"/>
<dbReference type="InParanoid" id="Q97W96"/>
<dbReference type="PhylomeDB" id="Q97W96"/>
<dbReference type="Proteomes" id="UP000001974">
    <property type="component" value="Chromosome"/>
</dbReference>
<dbReference type="GO" id="GO:0005829">
    <property type="term" value="C:cytosol"/>
    <property type="evidence" value="ECO:0000318"/>
    <property type="project" value="GO_Central"/>
</dbReference>
<dbReference type="GO" id="GO:0018444">
    <property type="term" value="C:translation release factor complex"/>
    <property type="evidence" value="ECO:0000318"/>
    <property type="project" value="GO_Central"/>
</dbReference>
<dbReference type="GO" id="GO:1990825">
    <property type="term" value="F:sequence-specific mRNA binding"/>
    <property type="evidence" value="ECO:0000318"/>
    <property type="project" value="GO_Central"/>
</dbReference>
<dbReference type="GO" id="GO:0016149">
    <property type="term" value="F:translation release factor activity, codon specific"/>
    <property type="evidence" value="ECO:0000318"/>
    <property type="project" value="GO_Central"/>
</dbReference>
<dbReference type="FunFam" id="3.30.420.60:FF:000003">
    <property type="entry name" value="Peptide chain release factor subunit 1"/>
    <property type="match status" value="1"/>
</dbReference>
<dbReference type="Gene3D" id="3.30.1330.30">
    <property type="match status" value="1"/>
</dbReference>
<dbReference type="Gene3D" id="3.30.960.10">
    <property type="entry name" value="eRF1 domain 1"/>
    <property type="match status" value="1"/>
</dbReference>
<dbReference type="Gene3D" id="3.30.420.60">
    <property type="entry name" value="eRF1 domain 2"/>
    <property type="match status" value="1"/>
</dbReference>
<dbReference type="HAMAP" id="MF_00424">
    <property type="entry name" value="Rel_fact_arch_1"/>
    <property type="match status" value="1"/>
</dbReference>
<dbReference type="InterPro" id="IPR042226">
    <property type="entry name" value="eFR1_2_sf"/>
</dbReference>
<dbReference type="InterPro" id="IPR005140">
    <property type="entry name" value="eRF1_1_Pelota"/>
</dbReference>
<dbReference type="InterPro" id="IPR024049">
    <property type="entry name" value="eRF1_1_sf"/>
</dbReference>
<dbReference type="InterPro" id="IPR005141">
    <property type="entry name" value="eRF1_2"/>
</dbReference>
<dbReference type="InterPro" id="IPR005142">
    <property type="entry name" value="eRF1_3"/>
</dbReference>
<dbReference type="InterPro" id="IPR020918">
    <property type="entry name" value="Peptide_chain-rel_aRF1"/>
</dbReference>
<dbReference type="InterPro" id="IPR004403">
    <property type="entry name" value="Peptide_chain-rel_eRF1/aRF1"/>
</dbReference>
<dbReference type="InterPro" id="IPR029064">
    <property type="entry name" value="Ribosomal_eL30-like_sf"/>
</dbReference>
<dbReference type="NCBIfam" id="TIGR03676">
    <property type="entry name" value="aRF1_eRF1"/>
    <property type="match status" value="1"/>
</dbReference>
<dbReference type="PANTHER" id="PTHR10113">
    <property type="entry name" value="PEPTIDE CHAIN RELEASE FACTOR SUBUNIT 1"/>
    <property type="match status" value="1"/>
</dbReference>
<dbReference type="Pfam" id="PF03463">
    <property type="entry name" value="eRF1_1"/>
    <property type="match status" value="1"/>
</dbReference>
<dbReference type="Pfam" id="PF03464">
    <property type="entry name" value="eRF1_2"/>
    <property type="match status" value="1"/>
</dbReference>
<dbReference type="Pfam" id="PF03465">
    <property type="entry name" value="eRF1_3"/>
    <property type="match status" value="1"/>
</dbReference>
<dbReference type="SMART" id="SM01194">
    <property type="entry name" value="eRF1_1"/>
    <property type="match status" value="1"/>
</dbReference>
<dbReference type="SUPFAM" id="SSF55315">
    <property type="entry name" value="L30e-like"/>
    <property type="match status" value="1"/>
</dbReference>
<dbReference type="SUPFAM" id="SSF55481">
    <property type="entry name" value="N-terminal domain of eukaryotic peptide chain release factor subunit 1, ERF1"/>
    <property type="match status" value="1"/>
</dbReference>
<dbReference type="SUPFAM" id="SSF53137">
    <property type="entry name" value="Translational machinery components"/>
    <property type="match status" value="1"/>
</dbReference>
<evidence type="ECO:0000250" key="1"/>
<evidence type="ECO:0000305" key="2"/>
<accession>Q97W96</accession>
<gene>
    <name type="primary">prf1</name>
    <name type="ordered locus">SSO2339</name>
</gene>
<comment type="function">
    <text evidence="1">Directs the termination of nascent peptide synthesis (translation) in response to the termination codons UAA, UAG and UGA.</text>
</comment>
<comment type="subunit">
    <text evidence="1">Heterodimer of two subunits, one of which binds GTP.</text>
</comment>
<comment type="interaction">
    <interactant intactId="EBI-15910165">
        <id>Q97W96</id>
    </interactant>
    <interactant intactId="EBI-15910144">
        <id>Q980K5</id>
        <label>SSO0287</label>
    </interactant>
    <organismsDiffer>false</organismsDiffer>
    <experiments>2</experiments>
</comment>
<comment type="subcellular location">
    <subcellularLocation>
        <location evidence="2">Cytoplasm</location>
    </subcellularLocation>
</comment>
<comment type="similarity">
    <text evidence="2">Belongs to the eukaryotic release factor 1 family.</text>
</comment>
<comment type="sequence caution" evidence="2">
    <conflict type="frameshift">
        <sequence resource="EMBL-CDS" id="AAK42492"/>
    </conflict>
</comment>